<dbReference type="EMBL" id="CP000826">
    <property type="protein sequence ID" value="ABV39958.1"/>
    <property type="molecule type" value="Genomic_DNA"/>
</dbReference>
<dbReference type="SMR" id="A8GA18"/>
<dbReference type="STRING" id="399741.Spro_0852"/>
<dbReference type="KEGG" id="spe:Spro_0852"/>
<dbReference type="eggNOG" id="COG0228">
    <property type="taxonomic scope" value="Bacteria"/>
</dbReference>
<dbReference type="HOGENOM" id="CLU_100590_5_1_6"/>
<dbReference type="OrthoDB" id="9807878at2"/>
<dbReference type="GO" id="GO:0005737">
    <property type="term" value="C:cytoplasm"/>
    <property type="evidence" value="ECO:0007669"/>
    <property type="project" value="UniProtKB-ARBA"/>
</dbReference>
<dbReference type="GO" id="GO:0015935">
    <property type="term" value="C:small ribosomal subunit"/>
    <property type="evidence" value="ECO:0007669"/>
    <property type="project" value="TreeGrafter"/>
</dbReference>
<dbReference type="GO" id="GO:0003735">
    <property type="term" value="F:structural constituent of ribosome"/>
    <property type="evidence" value="ECO:0007669"/>
    <property type="project" value="InterPro"/>
</dbReference>
<dbReference type="GO" id="GO:0006412">
    <property type="term" value="P:translation"/>
    <property type="evidence" value="ECO:0007669"/>
    <property type="project" value="UniProtKB-UniRule"/>
</dbReference>
<dbReference type="FunFam" id="3.30.1320.10:FF:000001">
    <property type="entry name" value="30S ribosomal protein S16"/>
    <property type="match status" value="1"/>
</dbReference>
<dbReference type="Gene3D" id="3.30.1320.10">
    <property type="match status" value="1"/>
</dbReference>
<dbReference type="HAMAP" id="MF_00385">
    <property type="entry name" value="Ribosomal_bS16"/>
    <property type="match status" value="1"/>
</dbReference>
<dbReference type="InterPro" id="IPR000307">
    <property type="entry name" value="Ribosomal_bS16"/>
</dbReference>
<dbReference type="InterPro" id="IPR020592">
    <property type="entry name" value="Ribosomal_bS16_CS"/>
</dbReference>
<dbReference type="InterPro" id="IPR023803">
    <property type="entry name" value="Ribosomal_bS16_dom_sf"/>
</dbReference>
<dbReference type="NCBIfam" id="TIGR00002">
    <property type="entry name" value="S16"/>
    <property type="match status" value="1"/>
</dbReference>
<dbReference type="PANTHER" id="PTHR12919">
    <property type="entry name" value="30S RIBOSOMAL PROTEIN S16"/>
    <property type="match status" value="1"/>
</dbReference>
<dbReference type="PANTHER" id="PTHR12919:SF20">
    <property type="entry name" value="SMALL RIBOSOMAL SUBUNIT PROTEIN BS16M"/>
    <property type="match status" value="1"/>
</dbReference>
<dbReference type="Pfam" id="PF00886">
    <property type="entry name" value="Ribosomal_S16"/>
    <property type="match status" value="1"/>
</dbReference>
<dbReference type="SUPFAM" id="SSF54565">
    <property type="entry name" value="Ribosomal protein S16"/>
    <property type="match status" value="1"/>
</dbReference>
<dbReference type="PROSITE" id="PS00732">
    <property type="entry name" value="RIBOSOMAL_S16"/>
    <property type="match status" value="1"/>
</dbReference>
<evidence type="ECO:0000255" key="1">
    <source>
        <dbReference type="HAMAP-Rule" id="MF_00385"/>
    </source>
</evidence>
<evidence type="ECO:0000305" key="2"/>
<comment type="similarity">
    <text evidence="1">Belongs to the bacterial ribosomal protein bS16 family.</text>
</comment>
<gene>
    <name evidence="1" type="primary">rpsP</name>
    <name type="ordered locus">Spro_0852</name>
</gene>
<accession>A8GA18</accession>
<name>RS16_SERP5</name>
<proteinExistence type="inferred from homology"/>
<feature type="chain" id="PRO_1000060714" description="Small ribosomal subunit protein bS16">
    <location>
        <begin position="1"/>
        <end position="82"/>
    </location>
</feature>
<reference key="1">
    <citation type="submission" date="2007-09" db="EMBL/GenBank/DDBJ databases">
        <title>Complete sequence of chromosome of Serratia proteamaculans 568.</title>
        <authorList>
            <consortium name="US DOE Joint Genome Institute"/>
            <person name="Copeland A."/>
            <person name="Lucas S."/>
            <person name="Lapidus A."/>
            <person name="Barry K."/>
            <person name="Glavina del Rio T."/>
            <person name="Dalin E."/>
            <person name="Tice H."/>
            <person name="Pitluck S."/>
            <person name="Chain P."/>
            <person name="Malfatti S."/>
            <person name="Shin M."/>
            <person name="Vergez L."/>
            <person name="Schmutz J."/>
            <person name="Larimer F."/>
            <person name="Land M."/>
            <person name="Hauser L."/>
            <person name="Kyrpides N."/>
            <person name="Kim E."/>
            <person name="Taghavi S."/>
            <person name="Newman L."/>
            <person name="Vangronsveld J."/>
            <person name="van der Lelie D."/>
            <person name="Richardson P."/>
        </authorList>
    </citation>
    <scope>NUCLEOTIDE SEQUENCE [LARGE SCALE GENOMIC DNA]</scope>
    <source>
        <strain>568</strain>
    </source>
</reference>
<organism>
    <name type="scientific">Serratia proteamaculans (strain 568)</name>
    <dbReference type="NCBI Taxonomy" id="399741"/>
    <lineage>
        <taxon>Bacteria</taxon>
        <taxon>Pseudomonadati</taxon>
        <taxon>Pseudomonadota</taxon>
        <taxon>Gammaproteobacteria</taxon>
        <taxon>Enterobacterales</taxon>
        <taxon>Yersiniaceae</taxon>
        <taxon>Serratia</taxon>
    </lineage>
</organism>
<protein>
    <recommendedName>
        <fullName evidence="1">Small ribosomal subunit protein bS16</fullName>
    </recommendedName>
    <alternativeName>
        <fullName evidence="2">30S ribosomal protein S16</fullName>
    </alternativeName>
</protein>
<sequence>MVTIRLARGGAKKRPFYQVVVTDSRNARDGRFIERVGFFNPIASGQAEALRLDLDRIEHWVGLGATVSDRVHALIKDAKKAA</sequence>
<keyword id="KW-0687">Ribonucleoprotein</keyword>
<keyword id="KW-0689">Ribosomal protein</keyword>